<sequence length="687" mass="77684">MILRNPLKSPFNSELSIFKALLMSTITESISNDYSRFISILGVCKTTDQFKQLHSQSITRGVAPNPTFQKKLFVFWCSRLGGHVSYAYKLFVKIPEPDVVVWNNMIKGWSKVDCDGEGVRLYLNMLKEGVTPDSHTFPFLLNGLKRDGGALACGKKLHCHVVKFGLGSNLYVQNALVKMYSLCGLMDMARGVFDRRCKEDVFSWNLMISGYNRMKEYEESIELLVEMERNLVSPTSVTLLLVLSACSKVKDKDLCKRVHEYVSECKTEPSLRLENALVNAYAACGEMDIAVRIFRSMKARDVISWTSIVKGYVERGNLKLARTYFDQMPVRDRISWTIMIDGYLRAGCFNESLEIFREMQSAGMIPDEFTMVSVLTACAHLGSLEIGEWIKTYIDKNKIKNDVVVGNALIDMYFKCGCSEKAQKVFHDMDQRDKFTWTAMVVGLANNGQGQEAIKVFFQMQDMSIQPDDITYLGVLSACNHSGMVDQARKFFAKMRSDHRIEPSLVHYGCMVDMLGRAGLVKEAYEILRKMPMNPNSIVWGALLGASRLHNDEPMAELAAKKILELEPDNGAVYALLCNIYAGCKRWKDLREVRRKIVDVAIKKTPGFSLIEVNGFAHEFVAGDKSHLQSEEIYMKLEELAQESTFAAYLPDTSELLFEAGDAYSVANRFVRLSGHPGTKNWKSTVR</sequence>
<organism>
    <name type="scientific">Arabidopsis thaliana</name>
    <name type="common">Mouse-ear cress</name>
    <dbReference type="NCBI Taxonomy" id="3702"/>
    <lineage>
        <taxon>Eukaryota</taxon>
        <taxon>Viridiplantae</taxon>
        <taxon>Streptophyta</taxon>
        <taxon>Embryophyta</taxon>
        <taxon>Tracheophyta</taxon>
        <taxon>Spermatophyta</taxon>
        <taxon>Magnoliopsida</taxon>
        <taxon>eudicotyledons</taxon>
        <taxon>Gunneridae</taxon>
        <taxon>Pentapetalae</taxon>
        <taxon>rosids</taxon>
        <taxon>malvids</taxon>
        <taxon>Brassicales</taxon>
        <taxon>Brassicaceae</taxon>
        <taxon>Camelineae</taxon>
        <taxon>Arabidopsis</taxon>
    </lineage>
</organism>
<proteinExistence type="inferred from homology"/>
<dbReference type="EMBL" id="AB026653">
    <property type="protein sequence ID" value="BAB02877.1"/>
    <property type="status" value="ALT_SEQ"/>
    <property type="molecule type" value="Genomic_DNA"/>
</dbReference>
<dbReference type="EMBL" id="CP002686">
    <property type="protein sequence ID" value="AEE75748.1"/>
    <property type="molecule type" value="Genomic_DNA"/>
</dbReference>
<dbReference type="RefSeq" id="NP_188214.1">
    <property type="nucleotide sequence ID" value="NM_112463.1"/>
</dbReference>
<dbReference type="SMR" id="Q9LSB8"/>
<dbReference type="PaxDb" id="3702-AT3G15930.1"/>
<dbReference type="EnsemblPlants" id="AT3G15930.1">
    <property type="protein sequence ID" value="AT3G15930.1"/>
    <property type="gene ID" value="AT3G15930"/>
</dbReference>
<dbReference type="GeneID" id="820836"/>
<dbReference type="Gramene" id="AT3G15930.1">
    <property type="protein sequence ID" value="AT3G15930.1"/>
    <property type="gene ID" value="AT3G15930"/>
</dbReference>
<dbReference type="KEGG" id="ath:AT3G15930"/>
<dbReference type="Araport" id="AT3G15930"/>
<dbReference type="TAIR" id="AT3G15930"/>
<dbReference type="eggNOG" id="KOG4197">
    <property type="taxonomic scope" value="Eukaryota"/>
</dbReference>
<dbReference type="HOGENOM" id="CLU_002706_0_1_1"/>
<dbReference type="InParanoid" id="Q9LSB8"/>
<dbReference type="OMA" id="CKTTDQF"/>
<dbReference type="PhylomeDB" id="Q9LSB8"/>
<dbReference type="PRO" id="PR:Q9LSB8"/>
<dbReference type="Proteomes" id="UP000006548">
    <property type="component" value="Chromosome 3"/>
</dbReference>
<dbReference type="ExpressionAtlas" id="Q9LSB8">
    <property type="expression patterns" value="differential"/>
</dbReference>
<dbReference type="GO" id="GO:0003723">
    <property type="term" value="F:RNA binding"/>
    <property type="evidence" value="ECO:0007669"/>
    <property type="project" value="InterPro"/>
</dbReference>
<dbReference type="GO" id="GO:0009451">
    <property type="term" value="P:RNA modification"/>
    <property type="evidence" value="ECO:0007669"/>
    <property type="project" value="InterPro"/>
</dbReference>
<dbReference type="FunFam" id="1.25.40.10:FF:000366">
    <property type="entry name" value="Pentatricopeptide (PPR) repeat-containing protein"/>
    <property type="match status" value="1"/>
</dbReference>
<dbReference type="FunFam" id="1.25.40.10:FF:001227">
    <property type="entry name" value="Pentatricopeptide repeat-containing protein At1g26900, mitochondrial"/>
    <property type="match status" value="1"/>
</dbReference>
<dbReference type="FunFam" id="1.25.40.10:FF:001963">
    <property type="entry name" value="Pentatricopeptide repeat-containing protein isoform A"/>
    <property type="match status" value="1"/>
</dbReference>
<dbReference type="FunFam" id="1.25.40.10:FF:000031">
    <property type="entry name" value="Pentatricopeptide repeat-containing protein mitochondrial"/>
    <property type="match status" value="1"/>
</dbReference>
<dbReference type="FunFam" id="1.25.40.10:FF:001203">
    <property type="entry name" value="Putative pentatricopeptide repeat-containing protein"/>
    <property type="match status" value="1"/>
</dbReference>
<dbReference type="Gene3D" id="1.25.40.10">
    <property type="entry name" value="Tetratricopeptide repeat domain"/>
    <property type="match status" value="4"/>
</dbReference>
<dbReference type="InterPro" id="IPR046848">
    <property type="entry name" value="E_motif"/>
</dbReference>
<dbReference type="InterPro" id="IPR046849">
    <property type="entry name" value="Eplus_motif"/>
</dbReference>
<dbReference type="InterPro" id="IPR002885">
    <property type="entry name" value="Pentatricopeptide_rpt"/>
</dbReference>
<dbReference type="InterPro" id="IPR046960">
    <property type="entry name" value="PPR_At4g14850-like_plant"/>
</dbReference>
<dbReference type="InterPro" id="IPR011990">
    <property type="entry name" value="TPR-like_helical_dom_sf"/>
</dbReference>
<dbReference type="NCBIfam" id="TIGR00756">
    <property type="entry name" value="PPR"/>
    <property type="match status" value="5"/>
</dbReference>
<dbReference type="PANTHER" id="PTHR47926">
    <property type="entry name" value="PENTATRICOPEPTIDE REPEAT-CONTAINING PROTEIN"/>
    <property type="match status" value="1"/>
</dbReference>
<dbReference type="Pfam" id="PF20431">
    <property type="entry name" value="E_motif"/>
    <property type="match status" value="1"/>
</dbReference>
<dbReference type="Pfam" id="PF20430">
    <property type="entry name" value="Eplus_motif"/>
    <property type="match status" value="1"/>
</dbReference>
<dbReference type="Pfam" id="PF01535">
    <property type="entry name" value="PPR"/>
    <property type="match status" value="3"/>
</dbReference>
<dbReference type="Pfam" id="PF12854">
    <property type="entry name" value="PPR_1"/>
    <property type="match status" value="1"/>
</dbReference>
<dbReference type="Pfam" id="PF13041">
    <property type="entry name" value="PPR_2"/>
    <property type="match status" value="4"/>
</dbReference>
<dbReference type="SUPFAM" id="SSF48452">
    <property type="entry name" value="TPR-like"/>
    <property type="match status" value="1"/>
</dbReference>
<dbReference type="PROSITE" id="PS51375">
    <property type="entry name" value="PPR"/>
    <property type="match status" value="15"/>
</dbReference>
<protein>
    <recommendedName>
        <fullName>Putative pentatricopeptide repeat-containing protein At3g15930</fullName>
    </recommendedName>
</protein>
<comment type="similarity">
    <text evidence="1">Belongs to the PPR family. PCMP-E subfamily.</text>
</comment>
<comment type="sequence caution" evidence="1">
    <conflict type="erroneous gene model prediction">
        <sequence resource="EMBL-CDS" id="BAB02877"/>
    </conflict>
</comment>
<comment type="online information" name="Pentatricopeptide repeat proteins">
    <link uri="https://ppr.plantenergy.uwa.edu.au"/>
</comment>
<name>PP235_ARATH</name>
<reference key="1">
    <citation type="journal article" date="2000" name="DNA Res.">
        <title>Structural analysis of Arabidopsis thaliana chromosome 3. I. Sequence features of the regions of 4,504,864 bp covered by sixty P1 and TAC clones.</title>
        <authorList>
            <person name="Sato S."/>
            <person name="Nakamura Y."/>
            <person name="Kaneko T."/>
            <person name="Katoh T."/>
            <person name="Asamizu E."/>
            <person name="Tabata S."/>
        </authorList>
    </citation>
    <scope>NUCLEOTIDE SEQUENCE [LARGE SCALE GENOMIC DNA]</scope>
    <source>
        <strain>cv. Columbia</strain>
    </source>
</reference>
<reference key="2">
    <citation type="journal article" date="2017" name="Plant J.">
        <title>Araport11: a complete reannotation of the Arabidopsis thaliana reference genome.</title>
        <authorList>
            <person name="Cheng C.Y."/>
            <person name="Krishnakumar V."/>
            <person name="Chan A.P."/>
            <person name="Thibaud-Nissen F."/>
            <person name="Schobel S."/>
            <person name="Town C.D."/>
        </authorList>
    </citation>
    <scope>GENOME REANNOTATION</scope>
    <source>
        <strain>cv. Columbia</strain>
    </source>
</reference>
<reference key="3">
    <citation type="journal article" date="2000" name="Plant Mol. Biol.">
        <title>In Arabidopsis thaliana, 1% of the genome codes for a novel protein family unique to plants.</title>
        <authorList>
            <person name="Aubourg S."/>
            <person name="Boudet N."/>
            <person name="Kreis M."/>
            <person name="Lecharny A."/>
        </authorList>
    </citation>
    <scope>GENE FAMILY</scope>
</reference>
<reference key="4">
    <citation type="journal article" date="2004" name="Plant Cell">
        <title>Genome-wide analysis of Arabidopsis pentatricopeptide repeat proteins reveals their essential role in organelle biogenesis.</title>
        <authorList>
            <person name="Lurin C."/>
            <person name="Andres C."/>
            <person name="Aubourg S."/>
            <person name="Bellaoui M."/>
            <person name="Bitton F."/>
            <person name="Bruyere C."/>
            <person name="Caboche M."/>
            <person name="Debast C."/>
            <person name="Gualberto J."/>
            <person name="Hoffmann B."/>
            <person name="Lecharny A."/>
            <person name="Le Ret M."/>
            <person name="Martin-Magniette M.-L."/>
            <person name="Mireau H."/>
            <person name="Peeters N."/>
            <person name="Renou J.-P."/>
            <person name="Szurek B."/>
            <person name="Taconnat L."/>
            <person name="Small I."/>
        </authorList>
    </citation>
    <scope>GENE FAMILY</scope>
</reference>
<gene>
    <name type="primary">PCMP-E51</name>
    <name type="ordered locus">At3g15930</name>
    <name type="ORF">MVC8.5</name>
</gene>
<accession>Q9LSB8</accession>
<keyword id="KW-1185">Reference proteome</keyword>
<keyword id="KW-0677">Repeat</keyword>
<evidence type="ECO:0000305" key="1"/>
<feature type="chain" id="PRO_0000356094" description="Putative pentatricopeptide repeat-containing protein At3g15930">
    <location>
        <begin position="1"/>
        <end position="687"/>
    </location>
</feature>
<feature type="repeat" description="PPR 1">
    <location>
        <begin position="98"/>
        <end position="132"/>
    </location>
</feature>
<feature type="repeat" description="PPR 2">
    <location>
        <begin position="133"/>
        <end position="168"/>
    </location>
</feature>
<feature type="repeat" description="PPR 3">
    <location>
        <begin position="169"/>
        <end position="199"/>
    </location>
</feature>
<feature type="repeat" description="PPR 4">
    <location>
        <begin position="200"/>
        <end position="234"/>
    </location>
</feature>
<feature type="repeat" description="PPR 5">
    <location>
        <begin position="235"/>
        <end position="269"/>
    </location>
</feature>
<feature type="repeat" description="PPR 6">
    <location>
        <begin position="270"/>
        <end position="304"/>
    </location>
</feature>
<feature type="repeat" description="PPR 7">
    <location>
        <begin position="305"/>
        <end position="331"/>
    </location>
</feature>
<feature type="repeat" description="PPR 8">
    <location>
        <begin position="332"/>
        <end position="366"/>
    </location>
</feature>
<feature type="repeat" description="PPR 9">
    <location>
        <begin position="367"/>
        <end position="401"/>
    </location>
</feature>
<feature type="repeat" description="PPR 10">
    <location>
        <begin position="402"/>
        <end position="432"/>
    </location>
</feature>
<feature type="repeat" description="PPR 11">
    <location>
        <begin position="433"/>
        <end position="467"/>
    </location>
</feature>
<feature type="repeat" description="PPR 12">
    <location>
        <begin position="468"/>
        <end position="498"/>
    </location>
</feature>
<feature type="repeat" description="PPR 13">
    <location>
        <begin position="504"/>
        <end position="534"/>
    </location>
</feature>
<feature type="region of interest" description="Type E motif">
    <location>
        <begin position="539"/>
        <end position="614"/>
    </location>
</feature>
<feature type="region of interest" description="Type E(+) motif">
    <location>
        <begin position="615"/>
        <end position="645"/>
    </location>
</feature>